<feature type="chain" id="PRO_0000450476" description="Phenylacetaldehyde synthase">
    <location>
        <begin position="1"/>
        <end position="508"/>
    </location>
</feature>
<feature type="binding site" evidence="2">
    <location>
        <position position="203"/>
    </location>
    <ligand>
        <name>L-phenylalanine</name>
        <dbReference type="ChEBI" id="CHEBI:58095"/>
    </ligand>
</feature>
<feature type="binding site" evidence="2">
    <location>
        <position position="318"/>
    </location>
    <ligand>
        <name>L-phenylalanine</name>
        <dbReference type="ChEBI" id="CHEBI:58095"/>
    </ligand>
</feature>
<feature type="binding site" evidence="2">
    <location>
        <position position="348"/>
    </location>
    <ligand>
        <name>L-phenylalanine</name>
        <dbReference type="ChEBI" id="CHEBI:58095"/>
    </ligand>
</feature>
<feature type="modified residue" description="N6-(pyridoxal phosphate)lysine" evidence="8">
    <location>
        <position position="319"/>
    </location>
</feature>
<feature type="sequence conflict" description="In Ref. 2; BAF64844." evidence="7" ref="2">
    <original>V</original>
    <variation>E</variation>
    <location>
        <position position="65"/>
    </location>
</feature>
<dbReference type="EC" id="4.1.1.109" evidence="3 4"/>
<dbReference type="EMBL" id="DQ192639">
    <property type="protein sequence ID" value="ABB04522.1"/>
    <property type="molecule type" value="mRNA"/>
</dbReference>
<dbReference type="EMBL" id="AB305071">
    <property type="protein sequence ID" value="BAF64844.1"/>
    <property type="molecule type" value="mRNA"/>
</dbReference>
<dbReference type="SMR" id="Q0ZS27"/>
<dbReference type="BioCyc" id="MetaCyc:MONOMER-13646"/>
<dbReference type="BRENDA" id="4.1.1.109">
    <property type="organism ID" value="7163"/>
</dbReference>
<dbReference type="GO" id="GO:0005737">
    <property type="term" value="C:cytoplasm"/>
    <property type="evidence" value="ECO:0007669"/>
    <property type="project" value="TreeGrafter"/>
</dbReference>
<dbReference type="GO" id="GO:1990055">
    <property type="term" value="F:phenylacetaldehyde synthase activity"/>
    <property type="evidence" value="ECO:0007669"/>
    <property type="project" value="UniProtKB-EC"/>
</dbReference>
<dbReference type="GO" id="GO:0030170">
    <property type="term" value="F:pyridoxal phosphate binding"/>
    <property type="evidence" value="ECO:0007669"/>
    <property type="project" value="InterPro"/>
</dbReference>
<dbReference type="GO" id="GO:0006520">
    <property type="term" value="P:amino acid metabolic process"/>
    <property type="evidence" value="ECO:0007669"/>
    <property type="project" value="InterPro"/>
</dbReference>
<dbReference type="GO" id="GO:0019752">
    <property type="term" value="P:carboxylic acid metabolic process"/>
    <property type="evidence" value="ECO:0007669"/>
    <property type="project" value="InterPro"/>
</dbReference>
<dbReference type="CDD" id="cd06450">
    <property type="entry name" value="DOPA_deC_like"/>
    <property type="match status" value="1"/>
</dbReference>
<dbReference type="FunFam" id="1.20.1340.10:FF:000001">
    <property type="entry name" value="Histidine decarboxylase"/>
    <property type="match status" value="1"/>
</dbReference>
<dbReference type="FunFam" id="3.40.640.10:FF:000025">
    <property type="entry name" value="Histidine decarboxylase"/>
    <property type="match status" value="1"/>
</dbReference>
<dbReference type="Gene3D" id="3.90.1150.10">
    <property type="entry name" value="Aspartate Aminotransferase, domain 1"/>
    <property type="match status" value="1"/>
</dbReference>
<dbReference type="Gene3D" id="1.20.1340.10">
    <property type="entry name" value="dopa decarboxylase, N-terminal domain"/>
    <property type="match status" value="1"/>
</dbReference>
<dbReference type="Gene3D" id="3.40.640.10">
    <property type="entry name" value="Type I PLP-dependent aspartate aminotransferase-like (Major domain)"/>
    <property type="match status" value="1"/>
</dbReference>
<dbReference type="InterPro" id="IPR010977">
    <property type="entry name" value="Aromatic_deC"/>
</dbReference>
<dbReference type="InterPro" id="IPR002129">
    <property type="entry name" value="PyrdxlP-dep_de-COase"/>
</dbReference>
<dbReference type="InterPro" id="IPR015424">
    <property type="entry name" value="PyrdxlP-dep_Trfase"/>
</dbReference>
<dbReference type="InterPro" id="IPR015421">
    <property type="entry name" value="PyrdxlP-dep_Trfase_major"/>
</dbReference>
<dbReference type="InterPro" id="IPR015422">
    <property type="entry name" value="PyrdxlP-dep_Trfase_small"/>
</dbReference>
<dbReference type="InterPro" id="IPR021115">
    <property type="entry name" value="Pyridoxal-P_BS"/>
</dbReference>
<dbReference type="PANTHER" id="PTHR11999">
    <property type="entry name" value="GROUP II PYRIDOXAL-5-PHOSPHATE DECARBOXYLASE"/>
    <property type="match status" value="1"/>
</dbReference>
<dbReference type="PANTHER" id="PTHR11999:SF96">
    <property type="entry name" value="TYROSINE DECARBOXYLASE"/>
    <property type="match status" value="1"/>
</dbReference>
<dbReference type="Pfam" id="PF00282">
    <property type="entry name" value="Pyridoxal_deC"/>
    <property type="match status" value="1"/>
</dbReference>
<dbReference type="PRINTS" id="PR00800">
    <property type="entry name" value="YHDCRBOXLASE"/>
</dbReference>
<dbReference type="SUPFAM" id="SSF53383">
    <property type="entry name" value="PLP-dependent transferases"/>
    <property type="match status" value="1"/>
</dbReference>
<dbReference type="PROSITE" id="PS00392">
    <property type="entry name" value="DDC_GAD_HDC_YDC"/>
    <property type="match status" value="1"/>
</dbReference>
<sequence>MGSFPFHRDLQEIASSQLTKALDPEEFRKQGHMVINFIADYYQNIEKYPVLSRVEPGYLKKCLPVSAPYDPEPISTILRDVQNHIVPGLTHWQSPNFFAYFSSTASTAGFLGEILTTGFNVVGFNWVSSPAATELENIVMDWLGDMLQLPKSFHFSGNGGGVLHGSTCEAIVCTMVAARDQMLRRIGSENLGKLVVYGSDQTHSTLQKATQIVGINTENFRAIKTTKSTGFALSPEMLRLTISSDLEKGLVPLFLCATIGTTATTAIDPLEALCHVAKEYGVWVHVDAAYAGSACICPEFRHFINGVEGANSFSFNPHKWLFTGMDCCCLWVKNPSVLASSLSTNPEFLRNKASDSKQVVDYKDWQIALSRRFRALKLWLVLRSYGVANLRNFIRIHVKMAKTFEGLVRMDKRFEILVPRNFSLVCFRISPSALISSNEDDEIGMVNEVNCKLLEAINASGKAYMTHAVVGGLYVLRCAVGATLTEEKHIVEAWNVVQDHAQAILSTY</sequence>
<organism>
    <name type="scientific">Rosa hybrid cultivar</name>
    <dbReference type="NCBI Taxonomy" id="128735"/>
    <lineage>
        <taxon>Eukaryota</taxon>
        <taxon>Viridiplantae</taxon>
        <taxon>Streptophyta</taxon>
        <taxon>Embryophyta</taxon>
        <taxon>Tracheophyta</taxon>
        <taxon>Spermatophyta</taxon>
        <taxon>Magnoliopsida</taxon>
        <taxon>eudicotyledons</taxon>
        <taxon>Gunneridae</taxon>
        <taxon>Pentapetalae</taxon>
        <taxon>rosids</taxon>
        <taxon>fabids</taxon>
        <taxon>Rosales</taxon>
        <taxon>Rosaceae</taxon>
        <taxon>Rosoideae</taxon>
        <taxon>Rosoideae incertae sedis</taxon>
        <taxon>Rosa</taxon>
    </lineage>
</organism>
<name>PAAS_ROSHC</name>
<accession>Q0ZS27</accession>
<accession>A6BM85</accession>
<reference key="1">
    <citation type="journal article" date="2006" name="J. Biol. Chem.">
        <title>Plant phenylacetaldehyde synthase is a bifunctional homotetrameric enzyme that catalyzes phenylalanine decarboxylation and oxidation.</title>
        <authorList>
            <person name="Kaminaga Y."/>
            <person name="Schnepp J."/>
            <person name="Peel G."/>
            <person name="Kish C.M."/>
            <person name="Ben-Nissan G."/>
            <person name="Weiss D."/>
            <person name="Orlova I."/>
            <person name="Lavie O."/>
            <person name="Rhodes D."/>
            <person name="Wood K."/>
            <person name="Porterfield D.M."/>
            <person name="Cooper A.J."/>
            <person name="Schloss J.V."/>
            <person name="Pichersky E."/>
            <person name="Vainstein A."/>
            <person name="Dudareva N."/>
        </authorList>
    </citation>
    <scope>NUCLEOTIDE SEQUENCE [MRNA]</scope>
    <scope>FUNCTION</scope>
    <scope>CATALYTIC ACTIVITY</scope>
    <scope>COFACTOR</scope>
    <source>
        <tissue>Petal</tissue>
    </source>
</reference>
<reference key="2">
    <citation type="journal article" date="2007" name="Biosci. Biotechnol. Biochem.">
        <title>Production of 2-phenylethanol in roses as the dominant floral scent compound from L-phenylalanine by two key enzymes, a PLP-dependent decarboxylase and a phenylacetaldehyde reductase.</title>
        <authorList>
            <person name="Sakai M."/>
            <person name="Hirata H."/>
            <person name="Sayama H."/>
            <person name="Sekiguchi K."/>
            <person name="Itano H."/>
            <person name="Asai T."/>
            <person name="Dohra H."/>
            <person name="Hara M."/>
            <person name="Watanabe N."/>
        </authorList>
    </citation>
    <scope>NUCLEOTIDE SEQUENCE [MRNA]</scope>
    <scope>FUNCTION</scope>
    <scope>CATALYTIC ACTIVITY</scope>
    <scope>COFACTOR</scope>
</reference>
<comment type="function">
    <text evidence="3 4">Bifunctional enzyme that catalyzes the decarboxylation of L-phenylalanine to produce 2-phenylethylamine, which is then oxidized to form 2-phenylacetaldehyde, a constituent of floral scent in petals (PubMed:16766535, PubMed:17928708). 2-phenylacetaldehyde is a precursor of 2-phenylethanol, another constituent of floral scent in petals (PubMed:16766535, PubMed:17928708).</text>
</comment>
<comment type="catalytic activity">
    <reaction evidence="3 4">
        <text>L-phenylalanine + O2 + H2O + H(+) = 2-phenylacetaldehyde + H2O2 + NH4(+) + CO2</text>
        <dbReference type="Rhea" id="RHEA:55532"/>
        <dbReference type="ChEBI" id="CHEBI:15377"/>
        <dbReference type="ChEBI" id="CHEBI:15378"/>
        <dbReference type="ChEBI" id="CHEBI:15379"/>
        <dbReference type="ChEBI" id="CHEBI:16240"/>
        <dbReference type="ChEBI" id="CHEBI:16424"/>
        <dbReference type="ChEBI" id="CHEBI:16526"/>
        <dbReference type="ChEBI" id="CHEBI:28938"/>
        <dbReference type="ChEBI" id="CHEBI:58095"/>
        <dbReference type="EC" id="4.1.1.109"/>
    </reaction>
    <physiologicalReaction direction="left-to-right" evidence="3 4">
        <dbReference type="Rhea" id="RHEA:55533"/>
    </physiologicalReaction>
</comment>
<comment type="cofactor">
    <cofactor evidence="3 4">
        <name>pyridoxal 5'-phosphate</name>
        <dbReference type="ChEBI" id="CHEBI:597326"/>
    </cofactor>
</comment>
<comment type="subunit">
    <text evidence="1">Homotetramer.</text>
</comment>
<comment type="similarity">
    <text evidence="7">Belongs to the group II decarboxylase family.</text>
</comment>
<keyword id="KW-0210">Decarboxylase</keyword>
<keyword id="KW-0456">Lyase</keyword>
<keyword id="KW-0663">Pyridoxal phosphate</keyword>
<evidence type="ECO:0000250" key="1">
    <source>
        <dbReference type="UniProtKB" id="Q0ZQX0"/>
    </source>
</evidence>
<evidence type="ECO:0000250" key="2">
    <source>
        <dbReference type="UniProtKB" id="Q8RY79"/>
    </source>
</evidence>
<evidence type="ECO:0000269" key="3">
    <source>
    </source>
</evidence>
<evidence type="ECO:0000269" key="4">
    <source>
    </source>
</evidence>
<evidence type="ECO:0000303" key="5">
    <source>
    </source>
</evidence>
<evidence type="ECO:0000303" key="6">
    <source>
    </source>
</evidence>
<evidence type="ECO:0000305" key="7"/>
<evidence type="ECO:0000305" key="8">
    <source>
    </source>
</evidence>
<proteinExistence type="evidence at protein level"/>
<protein>
    <recommendedName>
        <fullName evidence="5">Phenylacetaldehyde synthase</fullName>
        <shortName evidence="5">RhPAAS</shortName>
        <ecNumber evidence="3 4">4.1.1.109</ecNumber>
    </recommendedName>
    <alternativeName>
        <fullName evidence="6">Aromatic L-amino acid decarboxylase</fullName>
    </alternativeName>
</protein>
<gene>
    <name evidence="5" type="primary">PAAS</name>
    <name evidence="6" type="synonym">AADC</name>
</gene>